<comment type="function">
    <text evidence="4">Catalyzes the conjugation of the 1'-hydroxyl group of D-myo-inositol-3-phosphate (also named L-myo-inositol-1-phosphate) with a lipid tail of cytidine diphosphate diacylglycerol (CDP-DAG), forming phosphatidylinositol phosphate (PIP) and CMP. PIP is a precursor of phosphatidylinositol (PI) which is an essential lipid required for cell wall formation.</text>
</comment>
<comment type="catalytic activity">
    <reaction evidence="4">
        <text>a CDP-1,2-diacyl-sn-glycerol + 1D-myo-inositol 3-phosphate = a 1,2-diacyl-sn-glycero-3-phospho-(1D-myo-inositol-3-phosphate) + CMP + H(+)</text>
        <dbReference type="Rhea" id="RHEA:60504"/>
        <dbReference type="ChEBI" id="CHEBI:15378"/>
        <dbReference type="ChEBI" id="CHEBI:58088"/>
        <dbReference type="ChEBI" id="CHEBI:58332"/>
        <dbReference type="ChEBI" id="CHEBI:58401"/>
        <dbReference type="ChEBI" id="CHEBI:60377"/>
    </reaction>
</comment>
<comment type="catalytic activity">
    <reaction evidence="4">
        <text>1,2-di-(9Z-octadecenoyl)-sn-glycero-3-cytidine-5'-diphosphate + 1D-myo-inositol 3-phosphate = 1,2-di-(9Z-octadecenoyl)-sn-glycero-3-phospho-(1D-myo-inositol-3-phosphate) + CMP + H(+)</text>
        <dbReference type="Rhea" id="RHEA:61216"/>
        <dbReference type="ChEBI" id="CHEBI:15378"/>
        <dbReference type="ChEBI" id="CHEBI:58401"/>
        <dbReference type="ChEBI" id="CHEBI:60377"/>
        <dbReference type="ChEBI" id="CHEBI:85356"/>
        <dbReference type="ChEBI" id="CHEBI:144472"/>
    </reaction>
</comment>
<comment type="cofactor">
    <cofactor evidence="1">
        <name>Mg(2+)</name>
        <dbReference type="ChEBI" id="CHEBI:18420"/>
    </cofactor>
    <text evidence="1">Contains a di-nuclear catalytic Mg(2+) center.</text>
</comment>
<comment type="pathway">
    <text evidence="7">Phospholipid metabolism; phosphatidylinositol phosphate biosynthesis.</text>
</comment>
<comment type="subunit">
    <text evidence="1">Homodimer.</text>
</comment>
<comment type="subcellular location">
    <subcellularLocation>
        <location evidence="2">Cell membrane</location>
        <topology evidence="2">Multi-pass membrane protein</topology>
    </subcellularLocation>
</comment>
<comment type="similarity">
    <text evidence="3 6">Belongs to the CDP-alcohol phosphatidyltransferase class-I family.</text>
</comment>
<reference key="1">
    <citation type="journal article" date="2003" name="Appl. Microbiol. Biotechnol.">
        <title>The Corynebacterium glutamicum genome: features and impacts on biotechnological processes.</title>
        <authorList>
            <person name="Ikeda M."/>
            <person name="Nakagawa S."/>
        </authorList>
    </citation>
    <scope>NUCLEOTIDE SEQUENCE [LARGE SCALE GENOMIC DNA]</scope>
    <source>
        <strain>ATCC 13032 / DSM 20300 / JCM 1318 / BCRC 11384 / CCUG 27702 / LMG 3730 / NBRC 12168 / NCIMB 10025 / NRRL B-2784 / 534</strain>
    </source>
</reference>
<reference key="2">
    <citation type="journal article" date="2014" name="Biochem. Biophys. Res. Commun.">
        <title>Ubiquitous distribution of phosphatidylinositol phosphate synthase and archaetidylinositol phosphate synthase in Bacteria and Archaea, which contain inositol phospholipid.</title>
        <authorList>
            <person name="Morii H."/>
            <person name="Ogawa M."/>
            <person name="Fukuda K."/>
            <person name="Taniguchi H."/>
        </authorList>
    </citation>
    <scope>FUNCTION</scope>
    <scope>CATALYTIC ACTIVITY</scope>
    <scope>PATHWAY</scope>
</reference>
<dbReference type="EC" id="2.7.8.-" evidence="4"/>
<dbReference type="EMBL" id="BA000036">
    <property type="protein sequence ID" value="BAB99062.1"/>
    <property type="molecule type" value="Genomic_DNA"/>
</dbReference>
<dbReference type="RefSeq" id="NP_600881.1">
    <property type="nucleotide sequence ID" value="NC_003450.3"/>
</dbReference>
<dbReference type="SMR" id="Q8NPZ2"/>
<dbReference type="STRING" id="196627.cg1878"/>
<dbReference type="DNASU" id="1019636"/>
<dbReference type="KEGG" id="cgb:cg1878"/>
<dbReference type="KEGG" id="cgl:Cgl1669"/>
<dbReference type="PATRIC" id="fig|196627.13.peg.1629"/>
<dbReference type="eggNOG" id="COG0558">
    <property type="taxonomic scope" value="Bacteria"/>
</dbReference>
<dbReference type="HOGENOM" id="CLU_080384_0_1_11"/>
<dbReference type="OrthoDB" id="116551at2"/>
<dbReference type="BioCyc" id="CORYNE:G18NG-11254-MONOMER"/>
<dbReference type="UniPathway" id="UPA00220"/>
<dbReference type="Proteomes" id="UP000000582">
    <property type="component" value="Chromosome"/>
</dbReference>
<dbReference type="GO" id="GO:0005886">
    <property type="term" value="C:plasma membrane"/>
    <property type="evidence" value="ECO:0007669"/>
    <property type="project" value="UniProtKB-SubCell"/>
</dbReference>
<dbReference type="GO" id="GO:0000287">
    <property type="term" value="F:magnesium ion binding"/>
    <property type="evidence" value="ECO:0007669"/>
    <property type="project" value="UniProtKB-UniRule"/>
</dbReference>
<dbReference type="GO" id="GO:0016780">
    <property type="term" value="F:phosphotransferase activity, for other substituted phosphate groups"/>
    <property type="evidence" value="ECO:0007669"/>
    <property type="project" value="UniProtKB-UniRule"/>
</dbReference>
<dbReference type="GO" id="GO:0008654">
    <property type="term" value="P:phospholipid biosynthetic process"/>
    <property type="evidence" value="ECO:0007669"/>
    <property type="project" value="UniProtKB-UniRule"/>
</dbReference>
<dbReference type="Gene3D" id="1.20.120.1760">
    <property type="match status" value="1"/>
</dbReference>
<dbReference type="HAMAP" id="MF_02241">
    <property type="entry name" value="PIP_synthase"/>
    <property type="match status" value="1"/>
</dbReference>
<dbReference type="InterPro" id="IPR000462">
    <property type="entry name" value="CDP-OH_P_trans"/>
</dbReference>
<dbReference type="InterPro" id="IPR043130">
    <property type="entry name" value="CDP-OH_PTrfase_TM_dom"/>
</dbReference>
<dbReference type="InterPro" id="IPR048254">
    <property type="entry name" value="CDP_ALCOHOL_P_TRANSF_CS"/>
</dbReference>
<dbReference type="InterPro" id="IPR044268">
    <property type="entry name" value="PIP_synthase_PgsA1"/>
</dbReference>
<dbReference type="NCBIfam" id="NF045883">
    <property type="entry name" value="PIPSynth"/>
    <property type="match status" value="1"/>
</dbReference>
<dbReference type="Pfam" id="PF01066">
    <property type="entry name" value="CDP-OH_P_transf"/>
    <property type="match status" value="1"/>
</dbReference>
<dbReference type="PROSITE" id="PS00379">
    <property type="entry name" value="CDP_ALCOHOL_P_TRANSF"/>
    <property type="match status" value="1"/>
</dbReference>
<name>PIPS_CORGL</name>
<sequence length="219" mass="22834">MLGLHGRKPAQVIVEPVAKLMIKLKVTPNQLTLVSAGLTVGVALLLIPTGHLIWAAVLTGLFAAFDMIDGTVARMQGGGTKFGATLDATCDRITDGALFGAITWWLVYSYDAPQALVAASLVCLVASQVISYVKARGEASGFTMDGGLVERPERLIVSLVGLGLTGMGVPYAIDVALWALAAGSIYTVVQRLVMAGKSPLAKEFTKAPAGAKADYSNTK</sequence>
<keyword id="KW-1003">Cell membrane</keyword>
<keyword id="KW-0444">Lipid biosynthesis</keyword>
<keyword id="KW-0443">Lipid metabolism</keyword>
<keyword id="KW-0460">Magnesium</keyword>
<keyword id="KW-0472">Membrane</keyword>
<keyword id="KW-0479">Metal-binding</keyword>
<keyword id="KW-0594">Phospholipid biosynthesis</keyword>
<keyword id="KW-1208">Phospholipid metabolism</keyword>
<keyword id="KW-1185">Reference proteome</keyword>
<keyword id="KW-0808">Transferase</keyword>
<keyword id="KW-0812">Transmembrane</keyword>
<keyword id="KW-1133">Transmembrane helix</keyword>
<gene>
    <name evidence="8" type="ordered locus">Cgl1669</name>
</gene>
<feature type="chain" id="PRO_0000448364" description="Phosphatidylinositol phosphate synthase">
    <location>
        <begin position="1"/>
        <end position="219"/>
    </location>
</feature>
<feature type="transmembrane region" description="Helical" evidence="2">
    <location>
        <begin position="31"/>
        <end position="47"/>
    </location>
</feature>
<feature type="transmembrane region" description="Helical" evidence="2">
    <location>
        <begin position="53"/>
        <end position="72"/>
    </location>
</feature>
<feature type="transmembrane region" description="Helical" evidence="2">
    <location>
        <begin position="93"/>
        <end position="110"/>
    </location>
</feature>
<feature type="transmembrane region" description="Helical" evidence="2">
    <location>
        <begin position="116"/>
        <end position="133"/>
    </location>
</feature>
<feature type="transmembrane region" description="Helical" evidence="2">
    <location>
        <begin position="154"/>
        <end position="171"/>
    </location>
</feature>
<feature type="transmembrane region" description="Helical" evidence="2">
    <location>
        <begin position="177"/>
        <end position="194"/>
    </location>
</feature>
<feature type="active site" description="Proton acceptor" evidence="1">
    <location>
        <position position="91"/>
    </location>
</feature>
<feature type="binding site" evidence="1">
    <location>
        <begin position="29"/>
        <end position="32"/>
    </location>
    <ligand>
        <name>a CDP-1,2-diacyl-sn-glycerol</name>
        <dbReference type="ChEBI" id="CHEBI:58332"/>
    </ligand>
</feature>
<feature type="binding site" evidence="1">
    <location>
        <position position="66"/>
    </location>
    <ligand>
        <name>Mg(2+)</name>
        <dbReference type="ChEBI" id="CHEBI:18420"/>
        <label>1</label>
    </ligand>
</feature>
<feature type="binding site" evidence="1">
    <location>
        <position position="66"/>
    </location>
    <ligand>
        <name>Mg(2+)</name>
        <dbReference type="ChEBI" id="CHEBI:18420"/>
        <label>2</label>
    </ligand>
</feature>
<feature type="binding site" evidence="1">
    <location>
        <position position="69"/>
    </location>
    <ligand>
        <name>Mg(2+)</name>
        <dbReference type="ChEBI" id="CHEBI:18420"/>
        <label>1</label>
    </ligand>
</feature>
<feature type="binding site" evidence="1">
    <location>
        <position position="70"/>
    </location>
    <ligand>
        <name>a CDP-1,2-diacyl-sn-glycerol</name>
        <dbReference type="ChEBI" id="CHEBI:58332"/>
    </ligand>
</feature>
<feature type="binding site" evidence="1">
    <location>
        <position position="74"/>
    </location>
    <ligand>
        <name>a CDP-1,2-diacyl-sn-glycerol</name>
        <dbReference type="ChEBI" id="CHEBI:58332"/>
    </ligand>
</feature>
<feature type="binding site" evidence="1">
    <location>
        <position position="80"/>
    </location>
    <ligand>
        <name>a CDP-1,2-diacyl-sn-glycerol</name>
        <dbReference type="ChEBI" id="CHEBI:58332"/>
    </ligand>
</feature>
<feature type="binding site" evidence="1">
    <location>
        <position position="87"/>
    </location>
    <ligand>
        <name>Mg(2+)</name>
        <dbReference type="ChEBI" id="CHEBI:18420"/>
        <label>1</label>
    </ligand>
</feature>
<feature type="binding site" evidence="1">
    <location>
        <position position="87"/>
    </location>
    <ligand>
        <name>Mg(2+)</name>
        <dbReference type="ChEBI" id="CHEBI:18420"/>
        <label>2</label>
    </ligand>
</feature>
<feature type="binding site" evidence="1">
    <location>
        <position position="91"/>
    </location>
    <ligand>
        <name>Mg(2+)</name>
        <dbReference type="ChEBI" id="CHEBI:18420"/>
        <label>2</label>
    </ligand>
</feature>
<proteinExistence type="evidence at protein level"/>
<evidence type="ECO:0000250" key="1">
    <source>
        <dbReference type="UniProtKB" id="P9WPG7"/>
    </source>
</evidence>
<evidence type="ECO:0000255" key="2"/>
<evidence type="ECO:0000255" key="3">
    <source>
        <dbReference type="HAMAP-Rule" id="MF_02241"/>
    </source>
</evidence>
<evidence type="ECO:0000269" key="4">
    <source>
    </source>
</evidence>
<evidence type="ECO:0000303" key="5">
    <source>
    </source>
</evidence>
<evidence type="ECO:0000305" key="6"/>
<evidence type="ECO:0000305" key="7">
    <source>
    </source>
</evidence>
<evidence type="ECO:0000312" key="8">
    <source>
        <dbReference type="EMBL" id="BAB99062.1"/>
    </source>
</evidence>
<organism>
    <name type="scientific">Corynebacterium glutamicum (strain ATCC 13032 / DSM 20300 / JCM 1318 / BCRC 11384 / CCUG 27702 / LMG 3730 / NBRC 12168 / NCIMB 10025 / NRRL B-2784 / 534)</name>
    <dbReference type="NCBI Taxonomy" id="196627"/>
    <lineage>
        <taxon>Bacteria</taxon>
        <taxon>Bacillati</taxon>
        <taxon>Actinomycetota</taxon>
        <taxon>Actinomycetes</taxon>
        <taxon>Mycobacteriales</taxon>
        <taxon>Corynebacteriaceae</taxon>
        <taxon>Corynebacterium</taxon>
    </lineage>
</organism>
<accession>Q8NPZ2</accession>
<accession>Q6M4V8</accession>
<protein>
    <recommendedName>
        <fullName evidence="5">Phosphatidylinositol phosphate synthase</fullName>
        <shortName evidence="5">PIP synthase</shortName>
        <ecNumber evidence="4">2.7.8.-</ecNumber>
    </recommendedName>
    <alternativeName>
        <fullName>CDP-diacylglycerol--D-myo-inositol-3-phosphate 3-phosphatidyltransferase</fullName>
    </alternativeName>
</protein>